<dbReference type="EC" id="2.7.11.1"/>
<dbReference type="EMBL" id="AC010675">
    <property type="protein sequence ID" value="AAG52555.1"/>
    <property type="status" value="ALT_SEQ"/>
    <property type="molecule type" value="Genomic_DNA"/>
</dbReference>
<dbReference type="EMBL" id="CP002684">
    <property type="protein sequence ID" value="AEE34997.1"/>
    <property type="molecule type" value="Genomic_DNA"/>
</dbReference>
<dbReference type="PIR" id="E96721">
    <property type="entry name" value="E96721"/>
</dbReference>
<dbReference type="RefSeq" id="NP_177149.2">
    <property type="nucleotide sequence ID" value="NM_105659.3"/>
</dbReference>
<dbReference type="SMR" id="F4I3V3"/>
<dbReference type="FunCoup" id="F4I3V3">
    <property type="interactions" value="897"/>
</dbReference>
<dbReference type="IntAct" id="F4I3V3">
    <property type="interactions" value="1"/>
</dbReference>
<dbReference type="GlyCosmos" id="F4I3V3">
    <property type="glycosylation" value="4 sites, No reported glycans"/>
</dbReference>
<dbReference type="GlyGen" id="F4I3V3">
    <property type="glycosylation" value="5 sites"/>
</dbReference>
<dbReference type="PaxDb" id="3702-AT1G69910.1"/>
<dbReference type="ProteomicsDB" id="238433"/>
<dbReference type="EnsemblPlants" id="AT1G69910.1">
    <property type="protein sequence ID" value="AT1G69910.1"/>
    <property type="gene ID" value="AT1G69910"/>
</dbReference>
<dbReference type="GeneID" id="843327"/>
<dbReference type="Gramene" id="AT1G69910.1">
    <property type="protein sequence ID" value="AT1G69910.1"/>
    <property type="gene ID" value="AT1G69910"/>
</dbReference>
<dbReference type="KEGG" id="ath:AT1G69910"/>
<dbReference type="Araport" id="AT1G69910"/>
<dbReference type="TAIR" id="AT1G69910"/>
<dbReference type="eggNOG" id="KOG1187">
    <property type="taxonomic scope" value="Eukaryota"/>
</dbReference>
<dbReference type="HOGENOM" id="CLU_000288_115_3_1"/>
<dbReference type="InParanoid" id="F4I3V3"/>
<dbReference type="OMA" id="NCSHCPW"/>
<dbReference type="PRO" id="PR:F4I3V3"/>
<dbReference type="Proteomes" id="UP000006548">
    <property type="component" value="Chromosome 1"/>
</dbReference>
<dbReference type="ExpressionAtlas" id="F4I3V3">
    <property type="expression patterns" value="baseline and differential"/>
</dbReference>
<dbReference type="GO" id="GO:0005886">
    <property type="term" value="C:plasma membrane"/>
    <property type="evidence" value="ECO:0007669"/>
    <property type="project" value="UniProtKB-SubCell"/>
</dbReference>
<dbReference type="GO" id="GO:0005524">
    <property type="term" value="F:ATP binding"/>
    <property type="evidence" value="ECO:0007669"/>
    <property type="project" value="UniProtKB-KW"/>
</dbReference>
<dbReference type="GO" id="GO:0030247">
    <property type="term" value="F:polysaccharide binding"/>
    <property type="evidence" value="ECO:0007669"/>
    <property type="project" value="InterPro"/>
</dbReference>
<dbReference type="GO" id="GO:0106310">
    <property type="term" value="F:protein serine kinase activity"/>
    <property type="evidence" value="ECO:0007669"/>
    <property type="project" value="RHEA"/>
</dbReference>
<dbReference type="GO" id="GO:0004674">
    <property type="term" value="F:protein serine/threonine kinase activity"/>
    <property type="evidence" value="ECO:0007669"/>
    <property type="project" value="UniProtKB-KW"/>
</dbReference>
<dbReference type="FunFam" id="1.10.510.10:FF:001070">
    <property type="entry name" value="LEAF RUST 10 DISEASE-RESISTANCE LOCUS RECEPTOR-LIKE PROTEIN KINASE-like 1.5"/>
    <property type="match status" value="1"/>
</dbReference>
<dbReference type="FunFam" id="3.30.200.20:FF:000736">
    <property type="entry name" value="Putative serine/threonine-protein kinase At1g18390 family"/>
    <property type="match status" value="1"/>
</dbReference>
<dbReference type="Gene3D" id="3.30.200.20">
    <property type="entry name" value="Phosphorylase Kinase, domain 1"/>
    <property type="match status" value="1"/>
</dbReference>
<dbReference type="Gene3D" id="1.10.510.10">
    <property type="entry name" value="Transferase(Phosphotransferase) domain 1"/>
    <property type="match status" value="1"/>
</dbReference>
<dbReference type="InterPro" id="IPR011009">
    <property type="entry name" value="Kinase-like_dom_sf"/>
</dbReference>
<dbReference type="InterPro" id="IPR000719">
    <property type="entry name" value="Prot_kinase_dom"/>
</dbReference>
<dbReference type="InterPro" id="IPR017441">
    <property type="entry name" value="Protein_kinase_ATP_BS"/>
</dbReference>
<dbReference type="InterPro" id="IPR008266">
    <property type="entry name" value="Tyr_kinase_AS"/>
</dbReference>
<dbReference type="InterPro" id="IPR025287">
    <property type="entry name" value="WAK_GUB"/>
</dbReference>
<dbReference type="PANTHER" id="PTHR46008">
    <property type="entry name" value="LEAF RUST 10 DISEASE-RESISTANCE LOCUS RECEPTOR-LIKE PROTEIN KINASE-LIKE 1.4"/>
    <property type="match status" value="1"/>
</dbReference>
<dbReference type="PANTHER" id="PTHR46008:SF18">
    <property type="entry name" value="PROTEIN KINASE DOMAIN-CONTAINING PROTEIN"/>
    <property type="match status" value="1"/>
</dbReference>
<dbReference type="Pfam" id="PF13947">
    <property type="entry name" value="GUB_WAK_bind"/>
    <property type="match status" value="1"/>
</dbReference>
<dbReference type="Pfam" id="PF00069">
    <property type="entry name" value="Pkinase"/>
    <property type="match status" value="1"/>
</dbReference>
<dbReference type="SUPFAM" id="SSF56112">
    <property type="entry name" value="Protein kinase-like (PK-like)"/>
    <property type="match status" value="1"/>
</dbReference>
<dbReference type="PROSITE" id="PS00107">
    <property type="entry name" value="PROTEIN_KINASE_ATP"/>
    <property type="match status" value="1"/>
</dbReference>
<dbReference type="PROSITE" id="PS50011">
    <property type="entry name" value="PROTEIN_KINASE_DOM"/>
    <property type="match status" value="1"/>
</dbReference>
<dbReference type="PROSITE" id="PS00109">
    <property type="entry name" value="PROTEIN_KINASE_TYR"/>
    <property type="match status" value="1"/>
</dbReference>
<protein>
    <recommendedName>
        <fullName evidence="5">LEAF RUST 10 DISEASE-RESISTANCE LOCUS RECEPTOR-LIKE PROTEIN KINASE-like 1.5</fullName>
        <ecNumber>2.7.11.1</ecNumber>
    </recommendedName>
    <alternativeName>
        <fullName evidence="6">Probable receptor-like serine/threonine-protein kinase LRK10L-1.5</fullName>
    </alternativeName>
</protein>
<evidence type="ECO:0000250" key="1">
    <source>
        <dbReference type="UniProtKB" id="P0C5E2"/>
    </source>
</evidence>
<evidence type="ECO:0000255" key="2"/>
<evidence type="ECO:0000255" key="3">
    <source>
        <dbReference type="PROSITE-ProRule" id="PRU00159"/>
    </source>
</evidence>
<evidence type="ECO:0000255" key="4">
    <source>
        <dbReference type="PROSITE-ProRule" id="PRU00498"/>
    </source>
</evidence>
<evidence type="ECO:0000303" key="5">
    <source>
    </source>
</evidence>
<evidence type="ECO:0000305" key="6"/>
<evidence type="ECO:0000312" key="7">
    <source>
        <dbReference type="Araport" id="AT1G69910"/>
    </source>
</evidence>
<evidence type="ECO:0000312" key="8">
    <source>
        <dbReference type="EMBL" id="AAG52555.1"/>
    </source>
</evidence>
<feature type="signal peptide" evidence="2">
    <location>
        <begin position="1"/>
        <end position="26"/>
    </location>
</feature>
<feature type="chain" id="PRO_5003316225" description="LEAF RUST 10 DISEASE-RESISTANCE LOCUS RECEPTOR-LIKE PROTEIN KINASE-like 1.5">
    <location>
        <begin position="27"/>
        <end position="636"/>
    </location>
</feature>
<feature type="topological domain" description="Extracellular" evidence="6">
    <location>
        <begin position="27"/>
        <end position="257"/>
    </location>
</feature>
<feature type="transmembrane region" description="Helical" evidence="2">
    <location>
        <begin position="258"/>
        <end position="278"/>
    </location>
</feature>
<feature type="topological domain" description="Cytoplasmic" evidence="6">
    <location>
        <begin position="279"/>
        <end position="636"/>
    </location>
</feature>
<feature type="domain" description="Protein kinase" evidence="3">
    <location>
        <begin position="324"/>
        <end position="628"/>
    </location>
</feature>
<feature type="active site" description="Proton acceptor" evidence="3">
    <location>
        <position position="458"/>
    </location>
</feature>
<feature type="binding site" evidence="3">
    <location>
        <begin position="330"/>
        <end position="338"/>
    </location>
    <ligand>
        <name>ATP</name>
        <dbReference type="ChEBI" id="CHEBI:30616"/>
    </ligand>
</feature>
<feature type="binding site" evidence="3">
    <location>
        <position position="352"/>
    </location>
    <ligand>
        <name>ATP</name>
        <dbReference type="ChEBI" id="CHEBI:30616"/>
    </ligand>
</feature>
<feature type="glycosylation site" description="N-linked (GlcNAc...) asparagine" evidence="4">
    <location>
        <position position="73"/>
    </location>
</feature>
<feature type="glycosylation site" description="N-linked (GlcNAc...) asparagine" evidence="4">
    <location>
        <position position="102"/>
    </location>
</feature>
<feature type="glycosylation site" description="N-linked (GlcNAc...) asparagine" evidence="4">
    <location>
        <position position="146"/>
    </location>
</feature>
<feature type="glycosylation site" description="N-linked (GlcNAc...) asparagine" evidence="4">
    <location>
        <position position="224"/>
    </location>
</feature>
<organism>
    <name type="scientific">Arabidopsis thaliana</name>
    <name type="common">Mouse-ear cress</name>
    <dbReference type="NCBI Taxonomy" id="3702"/>
    <lineage>
        <taxon>Eukaryota</taxon>
        <taxon>Viridiplantae</taxon>
        <taxon>Streptophyta</taxon>
        <taxon>Embryophyta</taxon>
        <taxon>Tracheophyta</taxon>
        <taxon>Spermatophyta</taxon>
        <taxon>Magnoliopsida</taxon>
        <taxon>eudicotyledons</taxon>
        <taxon>Gunneridae</taxon>
        <taxon>Pentapetalae</taxon>
        <taxon>rosids</taxon>
        <taxon>malvids</taxon>
        <taxon>Brassicales</taxon>
        <taxon>Brassicaceae</taxon>
        <taxon>Camelineae</taxon>
        <taxon>Arabidopsis</taxon>
    </lineage>
</organism>
<proteinExistence type="inferred from homology"/>
<keyword id="KW-0067">ATP-binding</keyword>
<keyword id="KW-1003">Cell membrane</keyword>
<keyword id="KW-0325">Glycoprotein</keyword>
<keyword id="KW-0418">Kinase</keyword>
<keyword id="KW-0472">Membrane</keyword>
<keyword id="KW-0547">Nucleotide-binding</keyword>
<keyword id="KW-0675">Receptor</keyword>
<keyword id="KW-1185">Reference proteome</keyword>
<keyword id="KW-0723">Serine/threonine-protein kinase</keyword>
<keyword id="KW-0732">Signal</keyword>
<keyword id="KW-0808">Transferase</keyword>
<keyword id="KW-0812">Transmembrane</keyword>
<keyword id="KW-1133">Transmembrane helix</keyword>
<accession>F4I3V3</accession>
<accession>Q9CAS4</accession>
<gene>
    <name evidence="5" type="primary">LRK10L-1.5</name>
    <name evidence="7" type="ordered locus">At1g69910</name>
    <name evidence="8" type="ORF">T17F3.6</name>
</gene>
<reference key="1">
    <citation type="journal article" date="2000" name="Nature">
        <title>Sequence and analysis of chromosome 1 of the plant Arabidopsis thaliana.</title>
        <authorList>
            <person name="Theologis A."/>
            <person name="Ecker J.R."/>
            <person name="Palm C.J."/>
            <person name="Federspiel N.A."/>
            <person name="Kaul S."/>
            <person name="White O."/>
            <person name="Alonso J."/>
            <person name="Altafi H."/>
            <person name="Araujo R."/>
            <person name="Bowman C.L."/>
            <person name="Brooks S.Y."/>
            <person name="Buehler E."/>
            <person name="Chan A."/>
            <person name="Chao Q."/>
            <person name="Chen H."/>
            <person name="Cheuk R.F."/>
            <person name="Chin C.W."/>
            <person name="Chung M.K."/>
            <person name="Conn L."/>
            <person name="Conway A.B."/>
            <person name="Conway A.R."/>
            <person name="Creasy T.H."/>
            <person name="Dewar K."/>
            <person name="Dunn P."/>
            <person name="Etgu P."/>
            <person name="Feldblyum T.V."/>
            <person name="Feng J.-D."/>
            <person name="Fong B."/>
            <person name="Fujii C.Y."/>
            <person name="Gill J.E."/>
            <person name="Goldsmith A.D."/>
            <person name="Haas B."/>
            <person name="Hansen N.F."/>
            <person name="Hughes B."/>
            <person name="Huizar L."/>
            <person name="Hunter J.L."/>
            <person name="Jenkins J."/>
            <person name="Johnson-Hopson C."/>
            <person name="Khan S."/>
            <person name="Khaykin E."/>
            <person name="Kim C.J."/>
            <person name="Koo H.L."/>
            <person name="Kremenetskaia I."/>
            <person name="Kurtz D.B."/>
            <person name="Kwan A."/>
            <person name="Lam B."/>
            <person name="Langin-Hooper S."/>
            <person name="Lee A."/>
            <person name="Lee J.M."/>
            <person name="Lenz C.A."/>
            <person name="Li J.H."/>
            <person name="Li Y.-P."/>
            <person name="Lin X."/>
            <person name="Liu S.X."/>
            <person name="Liu Z.A."/>
            <person name="Luros J.S."/>
            <person name="Maiti R."/>
            <person name="Marziali A."/>
            <person name="Militscher J."/>
            <person name="Miranda M."/>
            <person name="Nguyen M."/>
            <person name="Nierman W.C."/>
            <person name="Osborne B.I."/>
            <person name="Pai G."/>
            <person name="Peterson J."/>
            <person name="Pham P.K."/>
            <person name="Rizzo M."/>
            <person name="Rooney T."/>
            <person name="Rowley D."/>
            <person name="Sakano H."/>
            <person name="Salzberg S.L."/>
            <person name="Schwartz J.R."/>
            <person name="Shinn P."/>
            <person name="Southwick A.M."/>
            <person name="Sun H."/>
            <person name="Tallon L.J."/>
            <person name="Tambunga G."/>
            <person name="Toriumi M.J."/>
            <person name="Town C.D."/>
            <person name="Utterback T."/>
            <person name="Van Aken S."/>
            <person name="Vaysberg M."/>
            <person name="Vysotskaia V.S."/>
            <person name="Walker M."/>
            <person name="Wu D."/>
            <person name="Yu G."/>
            <person name="Fraser C.M."/>
            <person name="Venter J.C."/>
            <person name="Davis R.W."/>
        </authorList>
    </citation>
    <scope>NUCLEOTIDE SEQUENCE [LARGE SCALE GENOMIC DNA]</scope>
    <source>
        <strain>cv. Columbia</strain>
    </source>
</reference>
<reference key="2">
    <citation type="journal article" date="2017" name="Plant J.">
        <title>Araport11: a complete reannotation of the Arabidopsis thaliana reference genome.</title>
        <authorList>
            <person name="Cheng C.Y."/>
            <person name="Krishnakumar V."/>
            <person name="Chan A.P."/>
            <person name="Thibaud-Nissen F."/>
            <person name="Schobel S."/>
            <person name="Town C.D."/>
        </authorList>
    </citation>
    <scope>GENOME REANNOTATION</scope>
    <source>
        <strain>cv. Columbia</strain>
    </source>
</reference>
<reference key="3">
    <citation type="journal article" date="2001" name="Proc. Natl. Acad. Sci. U.S.A.">
        <title>Receptor-like kinases from Arabidopsis form a monophyletic gene family related to animal receptor kinases.</title>
        <authorList>
            <person name="Shiu S.H."/>
            <person name="Bleecker A.B."/>
        </authorList>
    </citation>
    <scope>GENE FAMILY</scope>
</reference>
<reference key="4">
    <citation type="journal article" date="2003" name="Plant Physiol.">
        <title>Expansion of the receptor-like kinase/Pelle gene family and receptor-like proteins in Arabidopsis.</title>
        <authorList>
            <person name="Shiu S.H."/>
            <person name="Bleecker A.B."/>
        </authorList>
    </citation>
    <scope>GENE FAMILY</scope>
</reference>
<name>LRL15_ARATH</name>
<sequence>MSQPPWRCFSLLIFVLTIFSTKPSSASTSCSSSFHCPPFNSSPPYPFSASPGCGHPNFQIQCSSSRATITIKNLTFSILHYSSISSSLTLSPITNTNRNTNNCSSLRFSSSPNRFIDLTGSPFRVSDSSCSRLSLLRPCSPFTLPNCSRCPWDCKLLKNPGRILHGCESTHGSLSEQGCQGDLLGFLQDFFTRFGFEVEWDESQDPYFIKCRDCQIKNGVCGFNSTHPNQDFICFHKSRSELVTQRDNNKRVNHIAVLSLIFALTCLLLVFSVAVAIFRSRRASFLSSINEEDPAALFLRHHRSAALLPPVFTFEELESATNKFDPKRKIGDGGFGSVYLGQLSDGQLLAVKFLHHHHGATAAATEHCKAFSMKSFCNEILILSSINHPNLVKLHGYCSDPRGLLLVHDYVTNGTLADHLHGRGPKMTWRVRLDIALQTALAMEYLHFDIVPPVVHRDITSSNIFVEKDMKIKVGDFGLSRLLVFSETTVNSATSSDYVCTGPQGTPGYLDPDYHRSFRLTEKSDVYSYGVVLMELITGMKAVDQRREKRDMALADLVVSKIQMGLLDQVIDPLLALDGDDVAAVSDGFGVAAVAELAFRCVATDKDDRPDAKEIVQELRRIRSHTRVADDDVAKN</sequence>
<comment type="catalytic activity">
    <reaction>
        <text>L-seryl-[protein] + ATP = O-phospho-L-seryl-[protein] + ADP + H(+)</text>
        <dbReference type="Rhea" id="RHEA:17989"/>
        <dbReference type="Rhea" id="RHEA-COMP:9863"/>
        <dbReference type="Rhea" id="RHEA-COMP:11604"/>
        <dbReference type="ChEBI" id="CHEBI:15378"/>
        <dbReference type="ChEBI" id="CHEBI:29999"/>
        <dbReference type="ChEBI" id="CHEBI:30616"/>
        <dbReference type="ChEBI" id="CHEBI:83421"/>
        <dbReference type="ChEBI" id="CHEBI:456216"/>
        <dbReference type="EC" id="2.7.11.1"/>
    </reaction>
</comment>
<comment type="catalytic activity">
    <reaction>
        <text>L-threonyl-[protein] + ATP = O-phospho-L-threonyl-[protein] + ADP + H(+)</text>
        <dbReference type="Rhea" id="RHEA:46608"/>
        <dbReference type="Rhea" id="RHEA-COMP:11060"/>
        <dbReference type="Rhea" id="RHEA-COMP:11605"/>
        <dbReference type="ChEBI" id="CHEBI:15378"/>
        <dbReference type="ChEBI" id="CHEBI:30013"/>
        <dbReference type="ChEBI" id="CHEBI:30616"/>
        <dbReference type="ChEBI" id="CHEBI:61977"/>
        <dbReference type="ChEBI" id="CHEBI:456216"/>
        <dbReference type="EC" id="2.7.11.1"/>
    </reaction>
</comment>
<comment type="subcellular location">
    <subcellularLocation>
        <location evidence="1">Cell membrane</location>
        <topology evidence="6">Single-pass type I membrane protein</topology>
    </subcellularLocation>
</comment>
<comment type="similarity">
    <text evidence="3">Belongs to the protein kinase superfamily. Ser/Thr protein kinase family.</text>
</comment>
<comment type="sequence caution" evidence="6">
    <conflict type="erroneous gene model prediction">
        <sequence resource="EMBL-CDS" id="AAG52555"/>
    </conflict>
</comment>